<gene>
    <name evidence="10 12" type="primary">TRBV5-7</name>
</gene>
<organism>
    <name type="scientific">Homo sapiens</name>
    <name type="common">Human</name>
    <dbReference type="NCBI Taxonomy" id="9606"/>
    <lineage>
        <taxon>Eukaryota</taxon>
        <taxon>Metazoa</taxon>
        <taxon>Chordata</taxon>
        <taxon>Craniata</taxon>
        <taxon>Vertebrata</taxon>
        <taxon>Euteleostomi</taxon>
        <taxon>Mammalia</taxon>
        <taxon>Eutheria</taxon>
        <taxon>Euarchontoglires</taxon>
        <taxon>Primates</taxon>
        <taxon>Haplorrhini</taxon>
        <taxon>Catarrhini</taxon>
        <taxon>Hominidae</taxon>
        <taxon>Homo</taxon>
    </lineage>
</organism>
<protein>
    <recommendedName>
        <fullName evidence="11">Probable non-functional T cell receptor beta variable 5-7</fullName>
    </recommendedName>
</protein>
<sequence length="114" mass="12386">MGPGLLCWVLLCPLGEGPVDAGVTQSPTHLIKTRGQHVTLRCSPISGHTSVSSYQQALGQGPQFIFQYYEKEERGRGNFPDQFSGHQFPNYSSELNVNALLLGDSALYLCASSL</sequence>
<dbReference type="EMBL" id="AC233282">
    <property type="status" value="NOT_ANNOTATED_CDS"/>
    <property type="molecule type" value="Genomic_DNA"/>
</dbReference>
<dbReference type="EMBL" id="AC244196">
    <property type="status" value="NOT_ANNOTATED_CDS"/>
    <property type="molecule type" value="Genomic_DNA"/>
</dbReference>
<dbReference type="SMR" id="A0A0A0MS05"/>
<dbReference type="FunCoup" id="A0A0A0MS05">
    <property type="interactions" value="366"/>
</dbReference>
<dbReference type="GlyCosmos" id="A0A0A0MS05">
    <property type="glycosylation" value="1 site, No reported glycans"/>
</dbReference>
<dbReference type="GlyGen" id="A0A0A0MS05">
    <property type="glycosylation" value="1 site"/>
</dbReference>
<dbReference type="BioMuta" id="TRBV5-7"/>
<dbReference type="MassIVE" id="A0A0A0MS05"/>
<dbReference type="Ensembl" id="ENST00000390378.1">
    <property type="protein sequence ID" value="ENSP00000374901.1"/>
    <property type="gene ID" value="ENSG00000211731.1"/>
</dbReference>
<dbReference type="Ensembl" id="ENST00000633790.1">
    <property type="protein sequence ID" value="ENSP00000488478.1"/>
    <property type="gene ID" value="ENSG00000282748.1"/>
</dbReference>
<dbReference type="UCSC" id="uc064ism.1">
    <property type="organism name" value="human"/>
</dbReference>
<dbReference type="AGR" id="HGNC:12224"/>
<dbReference type="GeneCards" id="TRBV5-7"/>
<dbReference type="HGNC" id="HGNC:12224">
    <property type="gene designation" value="TRBV5-7"/>
</dbReference>
<dbReference type="HPA" id="ENSG00000211731">
    <property type="expression patterns" value="Not detected"/>
</dbReference>
<dbReference type="neXtProt" id="NX_A0A0A0MS05"/>
<dbReference type="VEuPathDB" id="HostDB:ENSG00000211731"/>
<dbReference type="GeneTree" id="ENSGT00940000154270"/>
<dbReference type="HOGENOM" id="CLU_077975_9_4_1"/>
<dbReference type="InParanoid" id="A0A0A0MS05"/>
<dbReference type="OMA" id="HFREYHA"/>
<dbReference type="OrthoDB" id="9803478at2759"/>
<dbReference type="PAN-GO" id="A0A0A0MS05">
    <property type="GO annotations" value="2 GO annotations based on evolutionary models"/>
</dbReference>
<dbReference type="PhylomeDB" id="A0A0A0MS05"/>
<dbReference type="SignaLink" id="A0A0A0MS05"/>
<dbReference type="PRO" id="PR:A0A0A0MS05"/>
<dbReference type="Proteomes" id="UP000005640">
    <property type="component" value="Chromosome 7"/>
</dbReference>
<dbReference type="RNAct" id="A0A0A0MS05">
    <property type="molecule type" value="protein"/>
</dbReference>
<dbReference type="Bgee" id="ENSG00000211731">
    <property type="expression patterns" value="Expressed in granulocyte and 17 other cell types or tissues"/>
</dbReference>
<dbReference type="GO" id="GO:0005886">
    <property type="term" value="C:plasma membrane"/>
    <property type="evidence" value="ECO:0000318"/>
    <property type="project" value="GO_Central"/>
</dbReference>
<dbReference type="GO" id="GO:0042101">
    <property type="term" value="C:T cell receptor complex"/>
    <property type="evidence" value="ECO:0007669"/>
    <property type="project" value="UniProtKB-KW"/>
</dbReference>
<dbReference type="GO" id="GO:0002250">
    <property type="term" value="P:adaptive immune response"/>
    <property type="evidence" value="ECO:0007669"/>
    <property type="project" value="UniProtKB-KW"/>
</dbReference>
<dbReference type="GO" id="GO:0007166">
    <property type="term" value="P:cell surface receptor signaling pathway"/>
    <property type="evidence" value="ECO:0000318"/>
    <property type="project" value="GO_Central"/>
</dbReference>
<dbReference type="Gene3D" id="2.60.40.10">
    <property type="entry name" value="Immunoglobulins"/>
    <property type="match status" value="1"/>
</dbReference>
<dbReference type="InterPro" id="IPR036179">
    <property type="entry name" value="Ig-like_dom_sf"/>
</dbReference>
<dbReference type="InterPro" id="IPR013783">
    <property type="entry name" value="Ig-like_fold"/>
</dbReference>
<dbReference type="InterPro" id="IPR013106">
    <property type="entry name" value="Ig_V-set"/>
</dbReference>
<dbReference type="InterPro" id="IPR050413">
    <property type="entry name" value="TCR_beta_variable"/>
</dbReference>
<dbReference type="PANTHER" id="PTHR23268:SF6">
    <property type="entry name" value="T CELL RECEPTOR BETA VARIABLE 5-5-RELATED"/>
    <property type="match status" value="1"/>
</dbReference>
<dbReference type="PANTHER" id="PTHR23268">
    <property type="entry name" value="T-CELL RECEPTOR BETA CHAIN"/>
    <property type="match status" value="1"/>
</dbReference>
<dbReference type="Pfam" id="PF07686">
    <property type="entry name" value="V-set"/>
    <property type="match status" value="1"/>
</dbReference>
<dbReference type="SUPFAM" id="SSF48726">
    <property type="entry name" value="Immunoglobulin"/>
    <property type="match status" value="1"/>
</dbReference>
<name>TVB57_HUMAN</name>
<keyword id="KW-1064">Adaptive immunity</keyword>
<keyword id="KW-1003">Cell membrane</keyword>
<keyword id="KW-1015">Disulfide bond</keyword>
<keyword id="KW-0325">Glycoprotein</keyword>
<keyword id="KW-0391">Immunity</keyword>
<keyword id="KW-0393">Immunoglobulin domain</keyword>
<keyword id="KW-0472">Membrane</keyword>
<keyword id="KW-0675">Receptor</keyword>
<keyword id="KW-1185">Reference proteome</keyword>
<keyword id="KW-0732">Signal</keyword>
<keyword id="KW-1279">T cell receptor</keyword>
<proteinExistence type="evidence at protein level"/>
<comment type="function">
    <text evidence="3 4 6 7 8">Probable non-functional open reading frame (ORF) of V region of the variable domain of T cell receptor (TR) beta chain (PubMed:24600447). Non-functional ORF generally cannot participate in the synthesis of a productive T cell receptor (TR) chain due to altered V-(D)-J or switch recombination and/or splicing site (at mRNA level) and/or conserved amino acid change (protein level) (PubMed:9619395). Alpha-beta T cell receptors are antigen specific receptors which are essential to the immune response and are present on the cell surface of T lymphocytes. Recognize peptide-major histocompatibility (MH) (pMH) complexes that are displayed by antigen presenting cells (APC), a prerequisite for efficient T cell adaptive immunity against pathogens (PubMed:25493333). Binding of alpha-beta TR to pMH complex initiates TR-CD3 clustering on the cell surface and intracellular activation of LCK that phosphorylates the ITAM motifs of CD3G, CD3D, CD3E and CD247 enabling the recruitment of ZAP70. In turn ZAP70 phosphorylates LAT, which recruits numerous signaling molecules to form the LAT signalosome. The LAT signalosome propagates signal branching to three major signaling pathways, the calcium, the mitogen-activated protein kinase (MAPK) kinase and the nuclear factor NF-kappa-B (NF-kB) pathways, leading to the mobilization of transcription factors that are critical for gene expression and essential for T cell growth and differentiation (PubMed:23524462). The T cell repertoire is generated in the thymus, by V-(D)-J rearrangement. This repertoire is then shaped by intrathymic selection events to generate a peripheral T cell pool of self-MH restricted, non-autoaggressive T cells. Post-thymic interaction of alpha-beta TR with the pMH complexes shapes TR structural and functional avidity (PubMed:15040585).</text>
</comment>
<comment type="subunit">
    <text evidence="5">Alpha-beta TR is a heterodimer composed of an alpha and beta chain; disulfide-linked. The alpha-beta TR is associated with the transmembrane signaling CD3 coreceptor proteins to form the TR-CD3 (TcR or TCR). The assembly of alpha-beta TR heterodimers with CD3 occurs in the endoplasmic reticulum where a single alpha-beta TR heterodimer associates with one CD3D-CD3E heterodimer, one CD3G-CD3E heterodimer and one CD247 homodimer forming a stable octameric structure. CD3D-CD3E and CD3G-CD3E heterodimers preferentially associate with TR alpha and TR beta chains, respectively. The association of the CD247 homodimer is the last step of TcR assembly in the endoplasmic reticulum and is required for transport to the cell surface.</text>
</comment>
<comment type="subcellular location">
    <subcellularLocation>
        <location evidence="5">Cell membrane</location>
    </subcellularLocation>
</comment>
<comment type="polymorphism">
    <text evidence="11">There are several alleles. The sequence shown is that of IMGT allele TRBV5-7*01.</text>
</comment>
<comment type="caution">
    <text evidence="9 11">Most probably a non-functional protein that cannot participate to the synthesis of a productive T cell receptor (TR) chain due to a mutation at position 53, corresponding to a conserved amino acid, potentially leading to uncorrect folding (PubMed:9619395).</text>
</comment>
<evidence type="ECO:0000255" key="1"/>
<evidence type="ECO:0000255" key="2">
    <source>
        <dbReference type="PROSITE-ProRule" id="PRU00114"/>
    </source>
</evidence>
<evidence type="ECO:0000269" key="3">
    <source>
    </source>
</evidence>
<evidence type="ECO:0000303" key="4">
    <source>
    </source>
</evidence>
<evidence type="ECO:0000303" key="5">
    <source>
    </source>
</evidence>
<evidence type="ECO:0000303" key="6">
    <source>
    </source>
</evidence>
<evidence type="ECO:0000303" key="7">
    <source>
    </source>
</evidence>
<evidence type="ECO:0000303" key="8">
    <source>
    </source>
</evidence>
<evidence type="ECO:0000303" key="9">
    <source>
    </source>
</evidence>
<evidence type="ECO:0000303" key="10">
    <source ref="3"/>
</evidence>
<evidence type="ECO:0000305" key="11"/>
<evidence type="ECO:0000312" key="12">
    <source>
        <dbReference type="HGNC" id="HGNC:12224"/>
    </source>
</evidence>
<reference key="1">
    <citation type="journal article" date="2003" name="Nature">
        <title>The DNA sequence of human chromosome 7.</title>
        <authorList>
            <person name="Hillier L.W."/>
            <person name="Fulton R.S."/>
            <person name="Fulton L.A."/>
            <person name="Graves T.A."/>
            <person name="Pepin K.H."/>
            <person name="Wagner-McPherson C."/>
            <person name="Layman D."/>
            <person name="Maas J."/>
            <person name="Jaeger S."/>
            <person name="Walker R."/>
            <person name="Wylie K."/>
            <person name="Sekhon M."/>
            <person name="Becker M.C."/>
            <person name="O'Laughlin M.D."/>
            <person name="Schaller M.E."/>
            <person name="Fewell G.A."/>
            <person name="Delehaunty K.D."/>
            <person name="Miner T.L."/>
            <person name="Nash W.E."/>
            <person name="Cordes M."/>
            <person name="Du H."/>
            <person name="Sun H."/>
            <person name="Edwards J."/>
            <person name="Bradshaw-Cordum H."/>
            <person name="Ali J."/>
            <person name="Andrews S."/>
            <person name="Isak A."/>
            <person name="Vanbrunt A."/>
            <person name="Nguyen C."/>
            <person name="Du F."/>
            <person name="Lamar B."/>
            <person name="Courtney L."/>
            <person name="Kalicki J."/>
            <person name="Ozersky P."/>
            <person name="Bielicki L."/>
            <person name="Scott K."/>
            <person name="Holmes A."/>
            <person name="Harkins R."/>
            <person name="Harris A."/>
            <person name="Strong C.M."/>
            <person name="Hou S."/>
            <person name="Tomlinson C."/>
            <person name="Dauphin-Kohlberg S."/>
            <person name="Kozlowicz-Reilly A."/>
            <person name="Leonard S."/>
            <person name="Rohlfing T."/>
            <person name="Rock S.M."/>
            <person name="Tin-Wollam A.-M."/>
            <person name="Abbott A."/>
            <person name="Minx P."/>
            <person name="Maupin R."/>
            <person name="Strowmatt C."/>
            <person name="Latreille P."/>
            <person name="Miller N."/>
            <person name="Johnson D."/>
            <person name="Murray J."/>
            <person name="Woessner J.P."/>
            <person name="Wendl M.C."/>
            <person name="Yang S.-P."/>
            <person name="Schultz B.R."/>
            <person name="Wallis J.W."/>
            <person name="Spieth J."/>
            <person name="Bieri T.A."/>
            <person name="Nelson J.O."/>
            <person name="Berkowicz N."/>
            <person name="Wohldmann P.E."/>
            <person name="Cook L.L."/>
            <person name="Hickenbotham M.T."/>
            <person name="Eldred J."/>
            <person name="Williams D."/>
            <person name="Bedell J.A."/>
            <person name="Mardis E.R."/>
            <person name="Clifton S.W."/>
            <person name="Chissoe S.L."/>
            <person name="Marra M.A."/>
            <person name="Raymond C."/>
            <person name="Haugen E."/>
            <person name="Gillett W."/>
            <person name="Zhou Y."/>
            <person name="James R."/>
            <person name="Phelps K."/>
            <person name="Iadanoto S."/>
            <person name="Bubb K."/>
            <person name="Simms E."/>
            <person name="Levy R."/>
            <person name="Clendenning J."/>
            <person name="Kaul R."/>
            <person name="Kent W.J."/>
            <person name="Furey T.S."/>
            <person name="Baertsch R.A."/>
            <person name="Brent M.R."/>
            <person name="Keibler E."/>
            <person name="Flicek P."/>
            <person name="Bork P."/>
            <person name="Suyama M."/>
            <person name="Bailey J.A."/>
            <person name="Portnoy M.E."/>
            <person name="Torrents D."/>
            <person name="Chinwalla A.T."/>
            <person name="Gish W.R."/>
            <person name="Eddy S.R."/>
            <person name="McPherson J.D."/>
            <person name="Olson M.V."/>
            <person name="Eichler E.E."/>
            <person name="Green E.D."/>
            <person name="Waterston R.H."/>
            <person name="Wilson R.K."/>
        </authorList>
    </citation>
    <scope>NUCLEOTIDE SEQUENCE [LARGE SCALE GENOMIC DNA] (IMGT ALLELE TRBV5-7*01)</scope>
</reference>
<reference key="2">
    <citation type="journal article" date="1998" name="Exp. Clin. Immunogenet.">
        <title>IMGT (ImMunoGeneTics) locus on focus. A new section of Experimental and Clinical Immunogenetics.</title>
        <authorList>
            <person name="Lefranc M.P."/>
        </authorList>
    </citation>
    <scope>CHARACTERIZATION</scope>
</reference>
<reference key="3">
    <citation type="book" date="2001" name="The T Cell Receptor FactsBook.">
        <title>The T Cell Receptor FactsBook.</title>
        <editorList>
            <person name="Lefranc M.P."/>
            <person name="Lefranc G."/>
        </editorList>
        <authorList>
            <person name="Lefranc M.P."/>
            <person name="Lefranc G."/>
        </authorList>
    </citation>
    <scope>NOMENCLATURE</scope>
</reference>
<reference key="4">
    <citation type="journal article" date="2004" name="Nat. Rev. Immunol.">
        <title>The many important facets of T-cell repertoire diversity.</title>
        <authorList>
            <person name="Nikolich-Zugich J."/>
            <person name="Slifka M.K."/>
            <person name="Messaoudi I."/>
        </authorList>
    </citation>
    <scope>REVIEW ON T CELL REPERTOIRE DIVERSITY</scope>
</reference>
<reference key="5">
    <citation type="journal article" date="2010" name="Cold Spring Harb. Perspect. Biol.">
        <title>Structural biology of the T-cell receptor: insights into receptor assembly, ligand recognition, and initiation of signaling.</title>
        <authorList>
            <person name="Wucherpfennig K.W."/>
            <person name="Gagnon E."/>
            <person name="Call M.J."/>
            <person name="Huseby E.S."/>
            <person name="Call M.E."/>
        </authorList>
    </citation>
    <scope>REVIEW ON T CELL RECEPTOR-CD3 COMPLEX ASSEMBLY</scope>
    <scope>SUBCELLULAR LOCATION</scope>
</reference>
<reference key="6">
    <citation type="journal article" date="2013" name="Nat. Rev. Immunol.">
        <title>T cell receptor signalling networks: branched, diversified and bounded.</title>
        <authorList>
            <person name="Brownlie R.J."/>
            <person name="Zamoyska R."/>
        </authorList>
    </citation>
    <scope>REVIEW ON T CELL RECEPTOR SIGNALING</scope>
</reference>
<reference key="7">
    <citation type="journal article" date="2014" name="Front. Immunol.">
        <title>Immunoglobulin and T Cell Receptor Genes: IMGT((R)) and the Birth and Rise of Immunoinformatics.</title>
        <authorList>
            <person name="Lefranc M.P."/>
        </authorList>
    </citation>
    <scope>NOMENCLATURE</scope>
</reference>
<reference key="8">
    <citation type="journal article" date="2015" name="Annu. Rev. Immunol.">
        <title>T cell antigen receptor recognition of antigen-presenting molecules.</title>
        <authorList>
            <person name="Rossjohn J."/>
            <person name="Gras S."/>
            <person name="Miles J.J."/>
            <person name="Turner S.J."/>
            <person name="Godfrey D.I."/>
            <person name="McCluskey J."/>
        </authorList>
    </citation>
    <scope>REVIEW ON FUNCTION</scope>
</reference>
<accession>A0A0A0MS05</accession>
<feature type="signal peptide" evidence="1">
    <location>
        <begin position="1"/>
        <end position="21"/>
    </location>
</feature>
<feature type="chain" id="PRO_5014506431" description="Probable non-functional T cell receptor beta variable 5-7" evidence="1">
    <location>
        <begin position="22"/>
        <end position="114"/>
    </location>
</feature>
<feature type="domain" description="Ig-like" evidence="2">
    <location>
        <begin position="22"/>
        <end position="114" status="greater than"/>
    </location>
</feature>
<feature type="glycosylation site" description="N-linked (GlcNAc...) asparagine" evidence="1">
    <location>
        <position position="90"/>
    </location>
</feature>
<feature type="disulfide bond" evidence="2">
    <location>
        <begin position="42"/>
        <end position="110"/>
    </location>
</feature>
<feature type="non-terminal residue">
    <location>
        <position position="114"/>
    </location>
</feature>